<accession>Q59993</accession>
<feature type="chain" id="PRO_0000179695" description="ATP-dependent Clp protease proteolytic subunit 2">
    <location>
        <begin position="1"/>
        <end position="226"/>
    </location>
</feature>
<feature type="active site" description="Nucleophile" evidence="1">
    <location>
        <position position="118"/>
    </location>
</feature>
<feature type="active site" evidence="1">
    <location>
        <position position="143"/>
    </location>
</feature>
<organism>
    <name type="scientific">Synechocystis sp. (strain ATCC 27184 / PCC 6803 / Kazusa)</name>
    <dbReference type="NCBI Taxonomy" id="1111708"/>
    <lineage>
        <taxon>Bacteria</taxon>
        <taxon>Bacillati</taxon>
        <taxon>Cyanobacteriota</taxon>
        <taxon>Cyanophyceae</taxon>
        <taxon>Synechococcales</taxon>
        <taxon>Merismopediaceae</taxon>
        <taxon>Synechocystis</taxon>
    </lineage>
</organism>
<protein>
    <recommendedName>
        <fullName evidence="1">ATP-dependent Clp protease proteolytic subunit 2</fullName>
        <ecNumber evidence="1">3.4.21.92</ecNumber>
    </recommendedName>
    <alternativeName>
        <fullName evidence="1">Endopeptidase Clp 2</fullName>
    </alternativeName>
</protein>
<name>CLPP2_SYNY3</name>
<keyword id="KW-0963">Cytoplasm</keyword>
<keyword id="KW-0378">Hydrolase</keyword>
<keyword id="KW-0645">Protease</keyword>
<keyword id="KW-1185">Reference proteome</keyword>
<keyword id="KW-0720">Serine protease</keyword>
<reference key="1">
    <citation type="journal article" date="1995" name="DNA Res.">
        <title>Sequence analysis of the genome of the unicellular cyanobacterium Synechocystis sp. strain PCC6803. I. Sequence features in the 1 Mb region from map positions 64% to 92% of the genome.</title>
        <authorList>
            <person name="Kaneko T."/>
            <person name="Tanaka A."/>
            <person name="Sato S."/>
            <person name="Kotani H."/>
            <person name="Sazuka T."/>
            <person name="Miyajima N."/>
            <person name="Sugiura M."/>
            <person name="Tabata S."/>
        </authorList>
    </citation>
    <scope>NUCLEOTIDE SEQUENCE [LARGE SCALE GENOMIC DNA]</scope>
    <source>
        <strain>ATCC 27184 / PCC 6803 / N-1</strain>
    </source>
</reference>
<reference key="2">
    <citation type="journal article" date="1996" name="DNA Res.">
        <title>Sequence analysis of the genome of the unicellular cyanobacterium Synechocystis sp. strain PCC6803. II. Sequence determination of the entire genome and assignment of potential protein-coding regions.</title>
        <authorList>
            <person name="Kaneko T."/>
            <person name="Sato S."/>
            <person name="Kotani H."/>
            <person name="Tanaka A."/>
            <person name="Asamizu E."/>
            <person name="Nakamura Y."/>
            <person name="Miyajima N."/>
            <person name="Hirosawa M."/>
            <person name="Sugiura M."/>
            <person name="Sasamoto S."/>
            <person name="Kimura T."/>
            <person name="Hosouchi T."/>
            <person name="Matsuno A."/>
            <person name="Muraki A."/>
            <person name="Nakazaki N."/>
            <person name="Naruo K."/>
            <person name="Okumura S."/>
            <person name="Shimpo S."/>
            <person name="Takeuchi C."/>
            <person name="Wada T."/>
            <person name="Watanabe A."/>
            <person name="Yamada M."/>
            <person name="Yasuda M."/>
            <person name="Tabata S."/>
        </authorList>
    </citation>
    <scope>NUCLEOTIDE SEQUENCE [LARGE SCALE GENOMIC DNA]</scope>
    <source>
        <strain>ATCC 27184 / PCC 6803 / Kazusa</strain>
    </source>
</reference>
<gene>
    <name evidence="1" type="primary">clpP2</name>
    <name type="ordered locus">sll0534</name>
</gene>
<comment type="function">
    <text evidence="1">Cleaves peptides in various proteins in a process that requires ATP hydrolysis. Has a chymotrypsin-like activity. Plays a major role in the degradation of misfolded proteins.</text>
</comment>
<comment type="catalytic activity">
    <reaction evidence="1">
        <text>Hydrolysis of proteins to small peptides in the presence of ATP and magnesium. alpha-casein is the usual test substrate. In the absence of ATP, only oligopeptides shorter than five residues are hydrolyzed (such as succinyl-Leu-Tyr-|-NHMec, and Leu-Tyr-Leu-|-Tyr-Trp, in which cleavage of the -Tyr-|-Leu- and -Tyr-|-Trp bonds also occurs).</text>
        <dbReference type="EC" id="3.4.21.92"/>
    </reaction>
</comment>
<comment type="subunit">
    <text evidence="1">Fourteen ClpP subunits assemble into 2 heptameric rings which stack back to back to give a disk-like structure with a central cavity, resembling the structure of eukaryotic proteasomes.</text>
</comment>
<comment type="subcellular location">
    <subcellularLocation>
        <location evidence="1">Cytoplasm</location>
    </subcellularLocation>
</comment>
<comment type="similarity">
    <text evidence="1">Belongs to the peptidase S14 family.</text>
</comment>
<proteinExistence type="inferred from homology"/>
<sequence length="226" mass="24823">MVNSRSPYRSPLSTLGGNNIQSVVPMVVEQSGMGERAFDIYSRLLRERIIFLGTPVDDQVADSIVAQLLFLDAEDPEKDIQLYINSPGGSVYAGLAIYDTMQQIRPDVVTICFGLAASMGAFLLSGGCKGKRMALPSSRIMIHQPLGGAQGQAVEIEIQAREILYIKDRLNTMLVEHTGQPMEKLQEDTERDFFMSAEEAKEYGLIDQVISRPNLPDPTTPVTSLG</sequence>
<dbReference type="EC" id="3.4.21.92" evidence="1"/>
<dbReference type="EMBL" id="BA000022">
    <property type="protein sequence ID" value="BAA10867.1"/>
    <property type="molecule type" value="Genomic_DNA"/>
</dbReference>
<dbReference type="PIR" id="S76020">
    <property type="entry name" value="S76020"/>
</dbReference>
<dbReference type="SMR" id="Q59993"/>
<dbReference type="FunCoup" id="Q59993">
    <property type="interactions" value="422"/>
</dbReference>
<dbReference type="IntAct" id="Q59993">
    <property type="interactions" value="4"/>
</dbReference>
<dbReference type="STRING" id="1148.gene:10500373"/>
<dbReference type="MEROPS" id="S14.001"/>
<dbReference type="PaxDb" id="1148-1001377"/>
<dbReference type="EnsemblBacteria" id="BAA10867">
    <property type="protein sequence ID" value="BAA10867"/>
    <property type="gene ID" value="BAA10867"/>
</dbReference>
<dbReference type="KEGG" id="syn:sll0534"/>
<dbReference type="eggNOG" id="COG0740">
    <property type="taxonomic scope" value="Bacteria"/>
</dbReference>
<dbReference type="InParanoid" id="Q59993"/>
<dbReference type="PhylomeDB" id="Q59993"/>
<dbReference type="BRENDA" id="3.4.21.92">
    <property type="organism ID" value="382"/>
</dbReference>
<dbReference type="Proteomes" id="UP000001425">
    <property type="component" value="Chromosome"/>
</dbReference>
<dbReference type="GO" id="GO:0005737">
    <property type="term" value="C:cytoplasm"/>
    <property type="evidence" value="ECO:0007669"/>
    <property type="project" value="UniProtKB-SubCell"/>
</dbReference>
<dbReference type="GO" id="GO:0009368">
    <property type="term" value="C:endopeptidase Clp complex"/>
    <property type="evidence" value="ECO:0000318"/>
    <property type="project" value="GO_Central"/>
</dbReference>
<dbReference type="GO" id="GO:0004176">
    <property type="term" value="F:ATP-dependent peptidase activity"/>
    <property type="evidence" value="ECO:0000318"/>
    <property type="project" value="GO_Central"/>
</dbReference>
<dbReference type="GO" id="GO:0051117">
    <property type="term" value="F:ATPase binding"/>
    <property type="evidence" value="ECO:0000318"/>
    <property type="project" value="GO_Central"/>
</dbReference>
<dbReference type="GO" id="GO:0004252">
    <property type="term" value="F:serine-type endopeptidase activity"/>
    <property type="evidence" value="ECO:0000318"/>
    <property type="project" value="GO_Central"/>
</dbReference>
<dbReference type="GO" id="GO:0006515">
    <property type="term" value="P:protein quality control for misfolded or incompletely synthesized proteins"/>
    <property type="evidence" value="ECO:0000318"/>
    <property type="project" value="GO_Central"/>
</dbReference>
<dbReference type="CDD" id="cd07017">
    <property type="entry name" value="S14_ClpP_2"/>
    <property type="match status" value="1"/>
</dbReference>
<dbReference type="FunFam" id="3.90.226.10:FF:000001">
    <property type="entry name" value="ATP-dependent Clp protease proteolytic subunit"/>
    <property type="match status" value="1"/>
</dbReference>
<dbReference type="Gene3D" id="3.90.226.10">
    <property type="entry name" value="2-enoyl-CoA Hydratase, Chain A, domain 1"/>
    <property type="match status" value="1"/>
</dbReference>
<dbReference type="HAMAP" id="MF_00444">
    <property type="entry name" value="ClpP"/>
    <property type="match status" value="1"/>
</dbReference>
<dbReference type="InterPro" id="IPR001907">
    <property type="entry name" value="ClpP"/>
</dbReference>
<dbReference type="InterPro" id="IPR029045">
    <property type="entry name" value="ClpP/crotonase-like_dom_sf"/>
</dbReference>
<dbReference type="InterPro" id="IPR023562">
    <property type="entry name" value="ClpP/TepA"/>
</dbReference>
<dbReference type="InterPro" id="IPR033135">
    <property type="entry name" value="ClpP_His_AS"/>
</dbReference>
<dbReference type="InterPro" id="IPR018215">
    <property type="entry name" value="ClpP_Ser_AS"/>
</dbReference>
<dbReference type="NCBIfam" id="TIGR00493">
    <property type="entry name" value="clpP"/>
    <property type="match status" value="1"/>
</dbReference>
<dbReference type="NCBIfam" id="NF001368">
    <property type="entry name" value="PRK00277.1"/>
    <property type="match status" value="1"/>
</dbReference>
<dbReference type="NCBIfam" id="NF009205">
    <property type="entry name" value="PRK12553.1"/>
    <property type="match status" value="1"/>
</dbReference>
<dbReference type="PANTHER" id="PTHR10381">
    <property type="entry name" value="ATP-DEPENDENT CLP PROTEASE PROTEOLYTIC SUBUNIT"/>
    <property type="match status" value="1"/>
</dbReference>
<dbReference type="PANTHER" id="PTHR10381:SF70">
    <property type="entry name" value="ATP-DEPENDENT CLP PROTEASE PROTEOLYTIC SUBUNIT"/>
    <property type="match status" value="1"/>
</dbReference>
<dbReference type="Pfam" id="PF00574">
    <property type="entry name" value="CLP_protease"/>
    <property type="match status" value="1"/>
</dbReference>
<dbReference type="PRINTS" id="PR00127">
    <property type="entry name" value="CLPPROTEASEP"/>
</dbReference>
<dbReference type="SUPFAM" id="SSF52096">
    <property type="entry name" value="ClpP/crotonase"/>
    <property type="match status" value="1"/>
</dbReference>
<dbReference type="PROSITE" id="PS00382">
    <property type="entry name" value="CLP_PROTEASE_HIS"/>
    <property type="match status" value="1"/>
</dbReference>
<dbReference type="PROSITE" id="PS00381">
    <property type="entry name" value="CLP_PROTEASE_SER"/>
    <property type="match status" value="1"/>
</dbReference>
<evidence type="ECO:0000255" key="1">
    <source>
        <dbReference type="HAMAP-Rule" id="MF_00444"/>
    </source>
</evidence>